<accession>A2BSL2</accession>
<sequence length="385" mass="43350">MLKTQKDKNLENFFSSNNKTKKKKNIIVGLSGGVDSSLSAALLVERGWNVEGLTLWLMKGQGSCCSEGLVDAAGLCEDLGINHKIIDSREIFEREVIKKTTESYEKGFTPLPCSMCNKNVKFEEMLNYAISKKDFTHIATGHYARINKSSYATTLDCKNLVFKEFLLLRGADENKDQSYFLYSLSQEVLSRLEFPLGEMKKEDTRREALRLGLRTAQKPESQDLCLVEHYGSMQIFIDKHIEPKEGEIVHVNGKVLGKHNGIQHFTVGQRKGLGIAWPEPLYVKSLDRLKNIVYVADKSDLFNKEAIISKVNWVSIEEPEQEIEVQAQIRYRSNPVKGTLIPLKNLDNTTTTFKLIFEESQSSVTPGQAAVFYKGEILLGGGLIS</sequence>
<reference key="1">
    <citation type="journal article" date="2007" name="PLoS Genet.">
        <title>Patterns and implications of gene gain and loss in the evolution of Prochlorococcus.</title>
        <authorList>
            <person name="Kettler G.C."/>
            <person name="Martiny A.C."/>
            <person name="Huang K."/>
            <person name="Zucker J."/>
            <person name="Coleman M.L."/>
            <person name="Rodrigue S."/>
            <person name="Chen F."/>
            <person name="Lapidus A."/>
            <person name="Ferriera S."/>
            <person name="Johnson J."/>
            <person name="Steglich C."/>
            <person name="Church G.M."/>
            <person name="Richardson P."/>
            <person name="Chisholm S.W."/>
        </authorList>
    </citation>
    <scope>NUCLEOTIDE SEQUENCE [LARGE SCALE GENOMIC DNA]</scope>
    <source>
        <strain>AS9601</strain>
    </source>
</reference>
<comment type="function">
    <text evidence="1">Catalyzes the 2-thiolation of uridine at the wobble position (U34) of tRNA, leading to the formation of s(2)U34.</text>
</comment>
<comment type="catalytic activity">
    <reaction evidence="1">
        <text>S-sulfanyl-L-cysteinyl-[protein] + uridine(34) in tRNA + AH2 + ATP = 2-thiouridine(34) in tRNA + L-cysteinyl-[protein] + A + AMP + diphosphate + H(+)</text>
        <dbReference type="Rhea" id="RHEA:47032"/>
        <dbReference type="Rhea" id="RHEA-COMP:10131"/>
        <dbReference type="Rhea" id="RHEA-COMP:11726"/>
        <dbReference type="Rhea" id="RHEA-COMP:11727"/>
        <dbReference type="Rhea" id="RHEA-COMP:11728"/>
        <dbReference type="ChEBI" id="CHEBI:13193"/>
        <dbReference type="ChEBI" id="CHEBI:15378"/>
        <dbReference type="ChEBI" id="CHEBI:17499"/>
        <dbReference type="ChEBI" id="CHEBI:29950"/>
        <dbReference type="ChEBI" id="CHEBI:30616"/>
        <dbReference type="ChEBI" id="CHEBI:33019"/>
        <dbReference type="ChEBI" id="CHEBI:61963"/>
        <dbReference type="ChEBI" id="CHEBI:65315"/>
        <dbReference type="ChEBI" id="CHEBI:87170"/>
        <dbReference type="ChEBI" id="CHEBI:456215"/>
        <dbReference type="EC" id="2.8.1.13"/>
    </reaction>
</comment>
<comment type="subcellular location">
    <subcellularLocation>
        <location evidence="1">Cytoplasm</location>
    </subcellularLocation>
</comment>
<comment type="similarity">
    <text evidence="1">Belongs to the MnmA/TRMU family.</text>
</comment>
<name>MNMA_PROMS</name>
<protein>
    <recommendedName>
        <fullName evidence="1">tRNA-specific 2-thiouridylase MnmA</fullName>
        <ecNumber evidence="1">2.8.1.13</ecNumber>
    </recommendedName>
</protein>
<proteinExistence type="inferred from homology"/>
<keyword id="KW-0067">ATP-binding</keyword>
<keyword id="KW-0963">Cytoplasm</keyword>
<keyword id="KW-1015">Disulfide bond</keyword>
<keyword id="KW-0547">Nucleotide-binding</keyword>
<keyword id="KW-0694">RNA-binding</keyword>
<keyword id="KW-0808">Transferase</keyword>
<keyword id="KW-0819">tRNA processing</keyword>
<keyword id="KW-0820">tRNA-binding</keyword>
<organism>
    <name type="scientific">Prochlorococcus marinus (strain AS9601)</name>
    <dbReference type="NCBI Taxonomy" id="146891"/>
    <lineage>
        <taxon>Bacteria</taxon>
        <taxon>Bacillati</taxon>
        <taxon>Cyanobacteriota</taxon>
        <taxon>Cyanophyceae</taxon>
        <taxon>Synechococcales</taxon>
        <taxon>Prochlorococcaceae</taxon>
        <taxon>Prochlorococcus</taxon>
    </lineage>
</organism>
<dbReference type="EC" id="2.8.1.13" evidence="1"/>
<dbReference type="EMBL" id="CP000551">
    <property type="protein sequence ID" value="ABM70773.1"/>
    <property type="molecule type" value="Genomic_DNA"/>
</dbReference>
<dbReference type="RefSeq" id="WP_011818909.1">
    <property type="nucleotide sequence ID" value="NC_008816.1"/>
</dbReference>
<dbReference type="SMR" id="A2BSL2"/>
<dbReference type="STRING" id="146891.A9601_14901"/>
<dbReference type="KEGG" id="pmb:A9601_14901"/>
<dbReference type="eggNOG" id="COG0482">
    <property type="taxonomic scope" value="Bacteria"/>
</dbReference>
<dbReference type="HOGENOM" id="CLU_035188_0_0_3"/>
<dbReference type="OrthoDB" id="9800696at2"/>
<dbReference type="Proteomes" id="UP000002590">
    <property type="component" value="Chromosome"/>
</dbReference>
<dbReference type="GO" id="GO:0005737">
    <property type="term" value="C:cytoplasm"/>
    <property type="evidence" value="ECO:0007669"/>
    <property type="project" value="UniProtKB-SubCell"/>
</dbReference>
<dbReference type="GO" id="GO:0005524">
    <property type="term" value="F:ATP binding"/>
    <property type="evidence" value="ECO:0007669"/>
    <property type="project" value="UniProtKB-KW"/>
</dbReference>
<dbReference type="GO" id="GO:0000049">
    <property type="term" value="F:tRNA binding"/>
    <property type="evidence" value="ECO:0007669"/>
    <property type="project" value="UniProtKB-KW"/>
</dbReference>
<dbReference type="GO" id="GO:0103016">
    <property type="term" value="F:tRNA-uridine 2-sulfurtransferase activity"/>
    <property type="evidence" value="ECO:0007669"/>
    <property type="project" value="UniProtKB-EC"/>
</dbReference>
<dbReference type="GO" id="GO:0002143">
    <property type="term" value="P:tRNA wobble position uridine thiolation"/>
    <property type="evidence" value="ECO:0007669"/>
    <property type="project" value="TreeGrafter"/>
</dbReference>
<dbReference type="CDD" id="cd01998">
    <property type="entry name" value="MnmA_TRMU-like"/>
    <property type="match status" value="1"/>
</dbReference>
<dbReference type="FunFam" id="2.30.30.280:FF:000001">
    <property type="entry name" value="tRNA-specific 2-thiouridylase MnmA"/>
    <property type="match status" value="1"/>
</dbReference>
<dbReference type="Gene3D" id="2.30.30.280">
    <property type="entry name" value="Adenine nucleotide alpha hydrolases-like domains"/>
    <property type="match status" value="1"/>
</dbReference>
<dbReference type="Gene3D" id="3.40.50.620">
    <property type="entry name" value="HUPs"/>
    <property type="match status" value="1"/>
</dbReference>
<dbReference type="Gene3D" id="2.40.30.10">
    <property type="entry name" value="Translation factors"/>
    <property type="match status" value="1"/>
</dbReference>
<dbReference type="HAMAP" id="MF_00144">
    <property type="entry name" value="tRNA_thiouridyl_MnmA"/>
    <property type="match status" value="1"/>
</dbReference>
<dbReference type="InterPro" id="IPR004506">
    <property type="entry name" value="MnmA-like"/>
</dbReference>
<dbReference type="InterPro" id="IPR046885">
    <property type="entry name" value="MnmA-like_C"/>
</dbReference>
<dbReference type="InterPro" id="IPR046884">
    <property type="entry name" value="MnmA-like_central"/>
</dbReference>
<dbReference type="InterPro" id="IPR023382">
    <property type="entry name" value="MnmA-like_central_sf"/>
</dbReference>
<dbReference type="InterPro" id="IPR014729">
    <property type="entry name" value="Rossmann-like_a/b/a_fold"/>
</dbReference>
<dbReference type="NCBIfam" id="NF001138">
    <property type="entry name" value="PRK00143.1"/>
    <property type="match status" value="1"/>
</dbReference>
<dbReference type="NCBIfam" id="TIGR00420">
    <property type="entry name" value="trmU"/>
    <property type="match status" value="1"/>
</dbReference>
<dbReference type="PANTHER" id="PTHR11933:SF5">
    <property type="entry name" value="MITOCHONDRIAL TRNA-SPECIFIC 2-THIOURIDYLASE 1"/>
    <property type="match status" value="1"/>
</dbReference>
<dbReference type="PANTHER" id="PTHR11933">
    <property type="entry name" value="TRNA 5-METHYLAMINOMETHYL-2-THIOURIDYLATE -METHYLTRANSFERASE"/>
    <property type="match status" value="1"/>
</dbReference>
<dbReference type="Pfam" id="PF03054">
    <property type="entry name" value="tRNA_Me_trans"/>
    <property type="match status" value="1"/>
</dbReference>
<dbReference type="Pfam" id="PF20258">
    <property type="entry name" value="tRNA_Me_trans_C"/>
    <property type="match status" value="1"/>
</dbReference>
<dbReference type="Pfam" id="PF20259">
    <property type="entry name" value="tRNA_Me_trans_M"/>
    <property type="match status" value="1"/>
</dbReference>
<dbReference type="SUPFAM" id="SSF52402">
    <property type="entry name" value="Adenine nucleotide alpha hydrolases-like"/>
    <property type="match status" value="1"/>
</dbReference>
<gene>
    <name evidence="1" type="primary">mnmA</name>
    <name type="ordered locus">A9601_14901</name>
</gene>
<feature type="chain" id="PRO_0000349743" description="tRNA-specific 2-thiouridylase MnmA">
    <location>
        <begin position="1"/>
        <end position="385"/>
    </location>
</feature>
<feature type="region of interest" description="Interaction with tRNA" evidence="1">
    <location>
        <begin position="175"/>
        <end position="177"/>
    </location>
</feature>
<feature type="region of interest" description="Interaction with tRNA" evidence="1">
    <location>
        <begin position="330"/>
        <end position="331"/>
    </location>
</feature>
<feature type="active site" description="Nucleophile" evidence="1">
    <location>
        <position position="116"/>
    </location>
</feature>
<feature type="active site" description="Cysteine persulfide intermediate" evidence="1">
    <location>
        <position position="225"/>
    </location>
</feature>
<feature type="binding site" evidence="1">
    <location>
        <begin position="29"/>
        <end position="36"/>
    </location>
    <ligand>
        <name>ATP</name>
        <dbReference type="ChEBI" id="CHEBI:30616"/>
    </ligand>
</feature>
<feature type="binding site" evidence="1">
    <location>
        <position position="55"/>
    </location>
    <ligand>
        <name>ATP</name>
        <dbReference type="ChEBI" id="CHEBI:30616"/>
    </ligand>
</feature>
<feature type="binding site" evidence="1">
    <location>
        <position position="141"/>
    </location>
    <ligand>
        <name>ATP</name>
        <dbReference type="ChEBI" id="CHEBI:30616"/>
    </ligand>
</feature>
<feature type="site" description="Interaction with tRNA" evidence="1">
    <location>
        <position position="142"/>
    </location>
</feature>
<feature type="site" description="Interaction with tRNA" evidence="1">
    <location>
        <position position="368"/>
    </location>
</feature>
<feature type="disulfide bond" description="Alternate" evidence="1">
    <location>
        <begin position="116"/>
        <end position="225"/>
    </location>
</feature>
<evidence type="ECO:0000255" key="1">
    <source>
        <dbReference type="HAMAP-Rule" id="MF_00144"/>
    </source>
</evidence>